<proteinExistence type="inferred from homology"/>
<name>GCST_STAS1</name>
<feature type="chain" id="PRO_1000047718" description="Aminomethyltransferase">
    <location>
        <begin position="1"/>
        <end position="363"/>
    </location>
</feature>
<comment type="function">
    <text evidence="1">The glycine cleavage system catalyzes the degradation of glycine.</text>
</comment>
<comment type="catalytic activity">
    <reaction evidence="1">
        <text>N(6)-[(R)-S(8)-aminomethyldihydrolipoyl]-L-lysyl-[protein] + (6S)-5,6,7,8-tetrahydrofolate = N(6)-[(R)-dihydrolipoyl]-L-lysyl-[protein] + (6R)-5,10-methylene-5,6,7,8-tetrahydrofolate + NH4(+)</text>
        <dbReference type="Rhea" id="RHEA:16945"/>
        <dbReference type="Rhea" id="RHEA-COMP:10475"/>
        <dbReference type="Rhea" id="RHEA-COMP:10492"/>
        <dbReference type="ChEBI" id="CHEBI:15636"/>
        <dbReference type="ChEBI" id="CHEBI:28938"/>
        <dbReference type="ChEBI" id="CHEBI:57453"/>
        <dbReference type="ChEBI" id="CHEBI:83100"/>
        <dbReference type="ChEBI" id="CHEBI:83143"/>
        <dbReference type="EC" id="2.1.2.10"/>
    </reaction>
</comment>
<comment type="subunit">
    <text evidence="1">The glycine cleavage system is composed of four proteins: P, T, L and H.</text>
</comment>
<comment type="similarity">
    <text evidence="1">Belongs to the GcvT family.</text>
</comment>
<reference key="1">
    <citation type="journal article" date="2005" name="Proc. Natl. Acad. Sci. U.S.A.">
        <title>Whole genome sequence of Staphylococcus saprophyticus reveals the pathogenesis of uncomplicated urinary tract infection.</title>
        <authorList>
            <person name="Kuroda M."/>
            <person name="Yamashita A."/>
            <person name="Hirakawa H."/>
            <person name="Kumano M."/>
            <person name="Morikawa K."/>
            <person name="Higashide M."/>
            <person name="Maruyama A."/>
            <person name="Inose Y."/>
            <person name="Matoba K."/>
            <person name="Toh H."/>
            <person name="Kuhara S."/>
            <person name="Hattori M."/>
            <person name="Ohta T."/>
        </authorList>
    </citation>
    <scope>NUCLEOTIDE SEQUENCE [LARGE SCALE GENOMIC DNA]</scope>
    <source>
        <strain>ATCC 15305 / DSM 20229 / NCIMB 8711 / NCTC 7292 / S-41</strain>
    </source>
</reference>
<protein>
    <recommendedName>
        <fullName evidence="1">Aminomethyltransferase</fullName>
        <ecNumber evidence="1">2.1.2.10</ecNumber>
    </recommendedName>
    <alternativeName>
        <fullName evidence="1">Glycine cleavage system T protein</fullName>
    </alternativeName>
</protein>
<sequence>MSNELKKTPLYQTFVDSGAKIVEFGGWAMPVQFSSIKEEHNAVRTEMGLFDVSHMGEIIIKGSDASNLVQYLLSNDTDNVTTHKAQYTALCNEQGGIIDDLITYKLEENVYLLVVNAGNTEKDFEWMYEKAKAFDAEVINVSTEYGQLAIQGPKARDLVQQYVNIDVSEMKPFEFEQNVEFFGKNVILSQSGYTGEDGFEIYCNADDAPYLWDEILKNDVTPCGLGARDTLRLEAGLPLHGQDLSETITPYEAGIAFAAKPLIEADFIGKSVLKDQKENGSKRRTVGLEMIDKGIPRTGYEVYDLDGNQIGEITSGTQSPLTGKSIGLALINRDAFEMGKEVVVQVRKRQVKAKIVKKNQISK</sequence>
<dbReference type="EC" id="2.1.2.10" evidence="1"/>
<dbReference type="EMBL" id="AP008934">
    <property type="protein sequence ID" value="BAE18363.1"/>
    <property type="molecule type" value="Genomic_DNA"/>
</dbReference>
<dbReference type="RefSeq" id="WP_011303027.1">
    <property type="nucleotide sequence ID" value="NZ_MTGA01000038.1"/>
</dbReference>
<dbReference type="SMR" id="Q49XY1"/>
<dbReference type="GeneID" id="3616985"/>
<dbReference type="KEGG" id="ssp:SSP1218"/>
<dbReference type="PATRIC" id="fig|342451.11.peg.1217"/>
<dbReference type="eggNOG" id="COG0404">
    <property type="taxonomic scope" value="Bacteria"/>
</dbReference>
<dbReference type="HOGENOM" id="CLU_007884_10_2_9"/>
<dbReference type="OrthoDB" id="9774591at2"/>
<dbReference type="Proteomes" id="UP000006371">
    <property type="component" value="Chromosome"/>
</dbReference>
<dbReference type="GO" id="GO:0005829">
    <property type="term" value="C:cytosol"/>
    <property type="evidence" value="ECO:0007669"/>
    <property type="project" value="TreeGrafter"/>
</dbReference>
<dbReference type="GO" id="GO:0005960">
    <property type="term" value="C:glycine cleavage complex"/>
    <property type="evidence" value="ECO:0007669"/>
    <property type="project" value="InterPro"/>
</dbReference>
<dbReference type="GO" id="GO:0004047">
    <property type="term" value="F:aminomethyltransferase activity"/>
    <property type="evidence" value="ECO:0007669"/>
    <property type="project" value="UniProtKB-UniRule"/>
</dbReference>
<dbReference type="GO" id="GO:0008483">
    <property type="term" value="F:transaminase activity"/>
    <property type="evidence" value="ECO:0007669"/>
    <property type="project" value="UniProtKB-KW"/>
</dbReference>
<dbReference type="GO" id="GO:0019464">
    <property type="term" value="P:glycine decarboxylation via glycine cleavage system"/>
    <property type="evidence" value="ECO:0007669"/>
    <property type="project" value="UniProtKB-UniRule"/>
</dbReference>
<dbReference type="FunFam" id="2.40.30.110:FF:000003">
    <property type="entry name" value="Aminomethyltransferase"/>
    <property type="match status" value="1"/>
</dbReference>
<dbReference type="FunFam" id="3.30.70.1400:FF:000001">
    <property type="entry name" value="Aminomethyltransferase"/>
    <property type="match status" value="1"/>
</dbReference>
<dbReference type="FunFam" id="4.10.1250.10:FF:000001">
    <property type="entry name" value="Aminomethyltransferase"/>
    <property type="match status" value="1"/>
</dbReference>
<dbReference type="Gene3D" id="2.40.30.110">
    <property type="entry name" value="Aminomethyltransferase beta-barrel domains"/>
    <property type="match status" value="1"/>
</dbReference>
<dbReference type="Gene3D" id="3.30.70.1400">
    <property type="entry name" value="Aminomethyltransferase beta-barrel domains"/>
    <property type="match status" value="1"/>
</dbReference>
<dbReference type="Gene3D" id="4.10.1250.10">
    <property type="entry name" value="Aminomethyltransferase fragment"/>
    <property type="match status" value="1"/>
</dbReference>
<dbReference type="Gene3D" id="3.30.1360.120">
    <property type="entry name" value="Probable tRNA modification gtpase trme, domain 1"/>
    <property type="match status" value="1"/>
</dbReference>
<dbReference type="HAMAP" id="MF_00259">
    <property type="entry name" value="GcvT"/>
    <property type="match status" value="1"/>
</dbReference>
<dbReference type="InterPro" id="IPR006223">
    <property type="entry name" value="GCS_T"/>
</dbReference>
<dbReference type="InterPro" id="IPR022903">
    <property type="entry name" value="GCS_T_bac"/>
</dbReference>
<dbReference type="InterPro" id="IPR013977">
    <property type="entry name" value="GCST_C"/>
</dbReference>
<dbReference type="InterPro" id="IPR006222">
    <property type="entry name" value="GCV_T_N"/>
</dbReference>
<dbReference type="InterPro" id="IPR028896">
    <property type="entry name" value="GcvT/YgfZ/DmdA"/>
</dbReference>
<dbReference type="InterPro" id="IPR029043">
    <property type="entry name" value="GcvT/YgfZ_C"/>
</dbReference>
<dbReference type="InterPro" id="IPR027266">
    <property type="entry name" value="TrmE/GcvT_dom1"/>
</dbReference>
<dbReference type="NCBIfam" id="TIGR00528">
    <property type="entry name" value="gcvT"/>
    <property type="match status" value="1"/>
</dbReference>
<dbReference type="NCBIfam" id="NF001567">
    <property type="entry name" value="PRK00389.1"/>
    <property type="match status" value="1"/>
</dbReference>
<dbReference type="PANTHER" id="PTHR43757">
    <property type="entry name" value="AMINOMETHYLTRANSFERASE"/>
    <property type="match status" value="1"/>
</dbReference>
<dbReference type="PANTHER" id="PTHR43757:SF2">
    <property type="entry name" value="AMINOMETHYLTRANSFERASE, MITOCHONDRIAL"/>
    <property type="match status" value="1"/>
</dbReference>
<dbReference type="Pfam" id="PF01571">
    <property type="entry name" value="GCV_T"/>
    <property type="match status" value="1"/>
</dbReference>
<dbReference type="Pfam" id="PF08669">
    <property type="entry name" value="GCV_T_C"/>
    <property type="match status" value="1"/>
</dbReference>
<dbReference type="PIRSF" id="PIRSF006487">
    <property type="entry name" value="GcvT"/>
    <property type="match status" value="1"/>
</dbReference>
<dbReference type="SUPFAM" id="SSF101790">
    <property type="entry name" value="Aminomethyltransferase beta-barrel domain"/>
    <property type="match status" value="1"/>
</dbReference>
<dbReference type="SUPFAM" id="SSF103025">
    <property type="entry name" value="Folate-binding domain"/>
    <property type="match status" value="1"/>
</dbReference>
<gene>
    <name evidence="1" type="primary">gcvT</name>
    <name type="ordered locus">SSP1218</name>
</gene>
<keyword id="KW-0032">Aminotransferase</keyword>
<keyword id="KW-1185">Reference proteome</keyword>
<keyword id="KW-0808">Transferase</keyword>
<accession>Q49XY1</accession>
<organism>
    <name type="scientific">Staphylococcus saprophyticus subsp. saprophyticus (strain ATCC 15305 / DSM 20229 / NCIMB 8711 / NCTC 7292 / S-41)</name>
    <dbReference type="NCBI Taxonomy" id="342451"/>
    <lineage>
        <taxon>Bacteria</taxon>
        <taxon>Bacillati</taxon>
        <taxon>Bacillota</taxon>
        <taxon>Bacilli</taxon>
        <taxon>Bacillales</taxon>
        <taxon>Staphylococcaceae</taxon>
        <taxon>Staphylococcus</taxon>
    </lineage>
</organism>
<evidence type="ECO:0000255" key="1">
    <source>
        <dbReference type="HAMAP-Rule" id="MF_00259"/>
    </source>
</evidence>